<sequence length="397" mass="44874">MDRCKENCVSRPVKSTVPFGPKRVLVTEQIPSQHPGSASSGQAQRVLCPSNSQRVPPQAQKPVAGQKPVLKQLPAASGPRPASRLSNPQKSEQPQPAASGNNSEKEQTSIQKTEDSKKRQWTLEDFDIGRPLGKGKFGNVYLAREKQSKFILALKVLFKVQLEKAGVEHQLRREVEIQSHLRHPNILRLYGYFHDATRVYLILEYAPLGTVYRELQKLSKFDEQRTATYITELANALSYCHSKRVIHRDIKPENLLLGSNGELKIADFGWSVHAPSSRRTTLCGTLDYQPPEMIEGRMHDEKVDLWSLGVLCYEFLVGMPPFEAHTYQETYRRISRVEFTFPDFVTEGARDLISRLLKHNSSQRLTLAEVLEHPWIKANSSKPPTGHNSKEATSKSS</sequence>
<protein>
    <recommendedName>
        <fullName evidence="11">Aurora kinase A</fullName>
        <ecNumber evidence="4">2.7.11.1</ecNumber>
    </recommendedName>
    <alternativeName>
        <fullName evidence="3">Aurora 2</fullName>
    </alternativeName>
    <alternativeName>
        <fullName evidence="3">Aurora/IPL1-related kinase 1</fullName>
        <shortName evidence="3">ARK-1</shortName>
        <shortName evidence="3">Aurora-related kinase 1</shortName>
    </alternativeName>
    <alternativeName>
        <fullName evidence="5">Ipl1- and aurora-related kinase 1</fullName>
    </alternativeName>
    <alternativeName>
        <fullName evidence="3">Serine/threonine-protein kinase 15</fullName>
    </alternativeName>
    <alternativeName>
        <fullName evidence="3">Serine/threonine-protein kinase 6</fullName>
    </alternativeName>
    <alternativeName>
        <fullName evidence="5">Serine/threonine-protein kinase Ayk1</fullName>
    </alternativeName>
    <alternativeName>
        <fullName evidence="10">Serine/threonine-protein kinase aurora-A</fullName>
        <shortName evidence="10">ratAurA</shortName>
    </alternativeName>
</protein>
<accession>P59241</accession>
<gene>
    <name evidence="11" type="primary">Aurka</name>
    <name evidence="3" type="synonym">Aik</name>
    <name evidence="3" type="synonym">Airk1</name>
    <name evidence="3" type="synonym">Ark1</name>
    <name evidence="3" type="synonym">Aura</name>
    <name evidence="5" type="synonym">Ayk1</name>
    <name evidence="3" type="synonym">Btak</name>
    <name evidence="5" type="synonym">Iak1</name>
    <name evidence="3" type="synonym">Stk15</name>
    <name evidence="3" type="synonym">Stk6</name>
</gene>
<proteinExistence type="evidence at protein level"/>
<organism>
    <name type="scientific">Rattus norvegicus</name>
    <name type="common">Rat</name>
    <dbReference type="NCBI Taxonomy" id="10116"/>
    <lineage>
        <taxon>Eukaryota</taxon>
        <taxon>Metazoa</taxon>
        <taxon>Chordata</taxon>
        <taxon>Craniata</taxon>
        <taxon>Vertebrata</taxon>
        <taxon>Euteleostomi</taxon>
        <taxon>Mammalia</taxon>
        <taxon>Eutheria</taxon>
        <taxon>Euarchontoglires</taxon>
        <taxon>Glires</taxon>
        <taxon>Rodentia</taxon>
        <taxon>Myomorpha</taxon>
        <taxon>Muroidea</taxon>
        <taxon>Muridae</taxon>
        <taxon>Murinae</taxon>
        <taxon>Rattus</taxon>
    </lineage>
</organism>
<feature type="chain" id="PRO_0000086694" description="Aurora kinase A">
    <location>
        <begin position="1"/>
        <end position="397"/>
    </location>
</feature>
<feature type="domain" description="Protein kinase" evidence="6">
    <location>
        <begin position="126"/>
        <end position="376"/>
    </location>
</feature>
<feature type="region of interest" description="Disordered" evidence="8">
    <location>
        <begin position="1"/>
        <end position="118"/>
    </location>
</feature>
<feature type="region of interest" description="Activation segment" evidence="3">
    <location>
        <begin position="273"/>
        <end position="286"/>
    </location>
</feature>
<feature type="region of interest" description="Disordered" evidence="8">
    <location>
        <begin position="378"/>
        <end position="397"/>
    </location>
</feature>
<feature type="compositionally biased region" description="Polar residues" evidence="8">
    <location>
        <begin position="29"/>
        <end position="55"/>
    </location>
</feature>
<feature type="compositionally biased region" description="Polar residues" evidence="8">
    <location>
        <begin position="84"/>
        <end position="102"/>
    </location>
</feature>
<feature type="compositionally biased region" description="Basic and acidic residues" evidence="8">
    <location>
        <begin position="103"/>
        <end position="118"/>
    </location>
</feature>
<feature type="compositionally biased region" description="Polar residues" evidence="8">
    <location>
        <begin position="378"/>
        <end position="387"/>
    </location>
</feature>
<feature type="compositionally biased region" description="Basic and acidic residues" evidence="8">
    <location>
        <begin position="388"/>
        <end position="397"/>
    </location>
</feature>
<feature type="active site" description="Proton acceptor" evidence="6 7">
    <location>
        <position position="249"/>
    </location>
</feature>
<feature type="binding site" evidence="6">
    <location>
        <position position="136"/>
    </location>
    <ligand>
        <name>ATP</name>
        <dbReference type="ChEBI" id="CHEBI:30616"/>
    </ligand>
</feature>
<feature type="binding site" evidence="6">
    <location>
        <position position="155"/>
    </location>
    <ligand>
        <name>ATP</name>
        <dbReference type="ChEBI" id="CHEBI:30616"/>
    </ligand>
</feature>
<feature type="binding site" evidence="6">
    <location>
        <begin position="203"/>
        <end position="206"/>
    </location>
    <ligand>
        <name>ATP</name>
        <dbReference type="ChEBI" id="CHEBI:30616"/>
    </ligand>
</feature>
<feature type="binding site" evidence="3">
    <location>
        <begin position="253"/>
        <end position="254"/>
    </location>
    <ligand>
        <name>ATP</name>
        <dbReference type="ChEBI" id="CHEBI:30616"/>
    </ligand>
</feature>
<feature type="binding site" evidence="6">
    <location>
        <position position="267"/>
    </location>
    <ligand>
        <name>ATP</name>
        <dbReference type="ChEBI" id="CHEBI:30616"/>
    </ligand>
</feature>
<feature type="modified residue" description="Phosphoserine" evidence="3">
    <location>
        <position position="40"/>
    </location>
</feature>
<feature type="modified residue" description="Phosphoserine" evidence="3">
    <location>
        <position position="50"/>
    </location>
</feature>
<feature type="modified residue" description="Phosphothreonine" evidence="3">
    <location>
        <position position="280"/>
    </location>
</feature>
<feature type="modified residue" description="Phosphothreonine" evidence="3">
    <location>
        <position position="281"/>
    </location>
</feature>
<feature type="modified residue" description="Phosphoserine; by PKA and PAK" evidence="3">
    <location>
        <position position="335"/>
    </location>
</feature>
<feature type="cross-link" description="Glycyl lysine isopeptide (Lys-Gly) (interchain with G-Cter in SUMO2)" evidence="3">
    <location>
        <position position="251"/>
    </location>
</feature>
<dbReference type="EC" id="2.7.11.1" evidence="4"/>
<dbReference type="EMBL" id="AF537333">
    <property type="protein sequence ID" value="AAN06823.1"/>
    <property type="molecule type" value="mRNA"/>
</dbReference>
<dbReference type="SMR" id="P59241"/>
<dbReference type="FunCoup" id="P59241">
    <property type="interactions" value="1684"/>
</dbReference>
<dbReference type="STRING" id="10116.ENSRNOP00000051977"/>
<dbReference type="iPTMnet" id="P59241"/>
<dbReference type="PhosphoSitePlus" id="P59241"/>
<dbReference type="PaxDb" id="10116-ENSRNOP00000051977"/>
<dbReference type="AGR" id="RGD:628895"/>
<dbReference type="RGD" id="628895">
    <property type="gene designation" value="Aurka"/>
</dbReference>
<dbReference type="eggNOG" id="KOG0580">
    <property type="taxonomic scope" value="Eukaryota"/>
</dbReference>
<dbReference type="InParanoid" id="P59241"/>
<dbReference type="PhylomeDB" id="P59241"/>
<dbReference type="Reactome" id="R-RNO-174178">
    <property type="pathway name" value="APC/C:Cdh1 mediated degradation of Cdc20 and other APC/C:Cdh1 targeted proteins in late mitosis/early G1"/>
</dbReference>
<dbReference type="Reactome" id="R-RNO-2565942">
    <property type="pathway name" value="Regulation of PLK1 Activity at G2/M Transition"/>
</dbReference>
<dbReference type="Reactome" id="R-RNO-6804114">
    <property type="pathway name" value="TP53 Regulates Transcription of Genes Involved in G2 Cell Cycle Arrest"/>
</dbReference>
<dbReference type="Reactome" id="R-RNO-6804756">
    <property type="pathway name" value="Regulation of TP53 Activity through Phosphorylation"/>
</dbReference>
<dbReference type="Reactome" id="R-RNO-8854050">
    <property type="pathway name" value="FBXL7 down-regulates AURKA during mitotic entry and in early mitosis"/>
</dbReference>
<dbReference type="Reactome" id="R-RNO-8854518">
    <property type="pathway name" value="AURKA Activation by TPX2"/>
</dbReference>
<dbReference type="Reactome" id="R-RNO-8854521">
    <property type="pathway name" value="Interaction between PHLDA1 and AURKA"/>
</dbReference>
<dbReference type="PRO" id="PR:P59241"/>
<dbReference type="Proteomes" id="UP000002494">
    <property type="component" value="Unplaced"/>
</dbReference>
<dbReference type="GO" id="GO:0043203">
    <property type="term" value="C:axon hillock"/>
    <property type="evidence" value="ECO:0000266"/>
    <property type="project" value="RGD"/>
</dbReference>
<dbReference type="GO" id="GO:0016323">
    <property type="term" value="C:basolateral plasma membrane"/>
    <property type="evidence" value="ECO:0000250"/>
    <property type="project" value="UniProtKB"/>
</dbReference>
<dbReference type="GO" id="GO:0005814">
    <property type="term" value="C:centriole"/>
    <property type="evidence" value="ECO:0007669"/>
    <property type="project" value="UniProtKB-SubCell"/>
</dbReference>
<dbReference type="GO" id="GO:0005813">
    <property type="term" value="C:centrosome"/>
    <property type="evidence" value="ECO:0000314"/>
    <property type="project" value="RGD"/>
</dbReference>
<dbReference type="GO" id="GO:0032133">
    <property type="term" value="C:chromosome passenger complex"/>
    <property type="evidence" value="ECO:0000318"/>
    <property type="project" value="GO_Central"/>
</dbReference>
<dbReference type="GO" id="GO:0036064">
    <property type="term" value="C:ciliary basal body"/>
    <property type="evidence" value="ECO:0000250"/>
    <property type="project" value="UniProtKB"/>
</dbReference>
<dbReference type="GO" id="GO:0042585">
    <property type="term" value="C:germinal vesicle"/>
    <property type="evidence" value="ECO:0000266"/>
    <property type="project" value="RGD"/>
</dbReference>
<dbReference type="GO" id="GO:0098978">
    <property type="term" value="C:glutamatergic synapse"/>
    <property type="evidence" value="ECO:0000266"/>
    <property type="project" value="RGD"/>
</dbReference>
<dbReference type="GO" id="GO:0000776">
    <property type="term" value="C:kinetochore"/>
    <property type="evidence" value="ECO:0000318"/>
    <property type="project" value="GO_Central"/>
</dbReference>
<dbReference type="GO" id="GO:0072687">
    <property type="term" value="C:meiotic spindle"/>
    <property type="evidence" value="ECO:0000266"/>
    <property type="project" value="RGD"/>
</dbReference>
<dbReference type="GO" id="GO:0015630">
    <property type="term" value="C:microtubule cytoskeleton"/>
    <property type="evidence" value="ECO:0000266"/>
    <property type="project" value="RGD"/>
</dbReference>
<dbReference type="GO" id="GO:0005815">
    <property type="term" value="C:microtubule organizing center"/>
    <property type="evidence" value="ECO:0000266"/>
    <property type="project" value="RGD"/>
</dbReference>
<dbReference type="GO" id="GO:0072686">
    <property type="term" value="C:mitotic spindle"/>
    <property type="evidence" value="ECO:0000266"/>
    <property type="project" value="RGD"/>
</dbReference>
<dbReference type="GO" id="GO:0097431">
    <property type="term" value="C:mitotic spindle pole"/>
    <property type="evidence" value="ECO:0000250"/>
    <property type="project" value="UniProtKB"/>
</dbReference>
<dbReference type="GO" id="GO:0005634">
    <property type="term" value="C:nucleus"/>
    <property type="evidence" value="ECO:0000266"/>
    <property type="project" value="RGD"/>
</dbReference>
<dbReference type="GO" id="GO:0048471">
    <property type="term" value="C:perinuclear region of cytoplasm"/>
    <property type="evidence" value="ECO:0000266"/>
    <property type="project" value="RGD"/>
</dbReference>
<dbReference type="GO" id="GO:0014069">
    <property type="term" value="C:postsynaptic density"/>
    <property type="evidence" value="ECO:0000266"/>
    <property type="project" value="RGD"/>
</dbReference>
<dbReference type="GO" id="GO:0045120">
    <property type="term" value="C:pronucleus"/>
    <property type="evidence" value="ECO:0000266"/>
    <property type="project" value="RGD"/>
</dbReference>
<dbReference type="GO" id="GO:0005876">
    <property type="term" value="C:spindle microtubule"/>
    <property type="evidence" value="ECO:0000266"/>
    <property type="project" value="RGD"/>
</dbReference>
<dbReference type="GO" id="GO:0051233">
    <property type="term" value="C:spindle midzone"/>
    <property type="evidence" value="ECO:0000318"/>
    <property type="project" value="GO_Central"/>
</dbReference>
<dbReference type="GO" id="GO:0000922">
    <property type="term" value="C:spindle pole"/>
    <property type="evidence" value="ECO:0000250"/>
    <property type="project" value="UniProtKB"/>
</dbReference>
<dbReference type="GO" id="GO:0031616">
    <property type="term" value="C:spindle pole centrosome"/>
    <property type="evidence" value="ECO:0000266"/>
    <property type="project" value="RGD"/>
</dbReference>
<dbReference type="GO" id="GO:0005524">
    <property type="term" value="F:ATP binding"/>
    <property type="evidence" value="ECO:0007669"/>
    <property type="project" value="UniProtKB-KW"/>
</dbReference>
<dbReference type="GO" id="GO:0035175">
    <property type="term" value="F:histone H3S10 kinase activity"/>
    <property type="evidence" value="ECO:0000266"/>
    <property type="project" value="RGD"/>
</dbReference>
<dbReference type="GO" id="GO:0140677">
    <property type="term" value="F:molecular function activator activity"/>
    <property type="evidence" value="ECO:0000266"/>
    <property type="project" value="RGD"/>
</dbReference>
<dbReference type="GO" id="GO:0046982">
    <property type="term" value="F:protein heterodimerization activity"/>
    <property type="evidence" value="ECO:0000266"/>
    <property type="project" value="RGD"/>
</dbReference>
<dbReference type="GO" id="GO:0004672">
    <property type="term" value="F:protein kinase activity"/>
    <property type="evidence" value="ECO:0000250"/>
    <property type="project" value="UniProtKB"/>
</dbReference>
<dbReference type="GO" id="GO:0019901">
    <property type="term" value="F:protein kinase binding"/>
    <property type="evidence" value="ECO:0000266"/>
    <property type="project" value="RGD"/>
</dbReference>
<dbReference type="GO" id="GO:0106310">
    <property type="term" value="F:protein serine kinase activity"/>
    <property type="evidence" value="ECO:0007669"/>
    <property type="project" value="RHEA"/>
</dbReference>
<dbReference type="GO" id="GO:0004674">
    <property type="term" value="F:protein serine/threonine kinase activity"/>
    <property type="evidence" value="ECO:0000314"/>
    <property type="project" value="RGD"/>
</dbReference>
<dbReference type="GO" id="GO:0031625">
    <property type="term" value="F:ubiquitin protein ligase binding"/>
    <property type="evidence" value="ECO:0000266"/>
    <property type="project" value="RGD"/>
</dbReference>
<dbReference type="GO" id="GO:0009948">
    <property type="term" value="P:anterior/posterior axis specification"/>
    <property type="evidence" value="ECO:0000266"/>
    <property type="project" value="RGD"/>
</dbReference>
<dbReference type="GO" id="GO:0006915">
    <property type="term" value="P:apoptotic process"/>
    <property type="evidence" value="ECO:0000266"/>
    <property type="project" value="RGD"/>
</dbReference>
<dbReference type="GO" id="GO:0051301">
    <property type="term" value="P:cell division"/>
    <property type="evidence" value="ECO:0007669"/>
    <property type="project" value="UniProtKB-KW"/>
</dbReference>
<dbReference type="GO" id="GO:0007098">
    <property type="term" value="P:centrosome cycle"/>
    <property type="evidence" value="ECO:0000266"/>
    <property type="project" value="RGD"/>
</dbReference>
<dbReference type="GO" id="GO:0051642">
    <property type="term" value="P:centrosome localization"/>
    <property type="evidence" value="ECO:0000266"/>
    <property type="project" value="RGD"/>
</dbReference>
<dbReference type="GO" id="GO:0061523">
    <property type="term" value="P:cilium disassembly"/>
    <property type="evidence" value="ECO:0000250"/>
    <property type="project" value="UniProtKB"/>
</dbReference>
<dbReference type="GO" id="GO:0097421">
    <property type="term" value="P:liver regeneration"/>
    <property type="evidence" value="ECO:0000266"/>
    <property type="project" value="RGD"/>
</dbReference>
<dbReference type="GO" id="GO:0051321">
    <property type="term" value="P:meiotic cell cycle"/>
    <property type="evidence" value="ECO:0000266"/>
    <property type="project" value="RGD"/>
</dbReference>
<dbReference type="GO" id="GO:0000212">
    <property type="term" value="P:meiotic spindle organization"/>
    <property type="evidence" value="ECO:0000266"/>
    <property type="project" value="RGD"/>
</dbReference>
<dbReference type="GO" id="GO:0000226">
    <property type="term" value="P:microtubule cytoskeleton organization"/>
    <property type="evidence" value="ECO:0000266"/>
    <property type="project" value="RGD"/>
</dbReference>
<dbReference type="GO" id="GO:0000278">
    <property type="term" value="P:mitotic cell cycle"/>
    <property type="evidence" value="ECO:0000266"/>
    <property type="project" value="RGD"/>
</dbReference>
<dbReference type="GO" id="GO:0007100">
    <property type="term" value="P:mitotic centrosome separation"/>
    <property type="evidence" value="ECO:0000266"/>
    <property type="project" value="RGD"/>
</dbReference>
<dbReference type="GO" id="GO:0007052">
    <property type="term" value="P:mitotic spindle organization"/>
    <property type="evidence" value="ECO:0000266"/>
    <property type="project" value="RGD"/>
</dbReference>
<dbReference type="GO" id="GO:0043066">
    <property type="term" value="P:negative regulation of apoptotic process"/>
    <property type="evidence" value="ECO:0000266"/>
    <property type="project" value="RGD"/>
</dbReference>
<dbReference type="GO" id="GO:0010629">
    <property type="term" value="P:negative regulation of gene expression"/>
    <property type="evidence" value="ECO:0000266"/>
    <property type="project" value="RGD"/>
</dbReference>
<dbReference type="GO" id="GO:1990138">
    <property type="term" value="P:neuron projection extension"/>
    <property type="evidence" value="ECO:0000266"/>
    <property type="project" value="RGD"/>
</dbReference>
<dbReference type="GO" id="GO:1904146">
    <property type="term" value="P:positive regulation of meiotic cell cycle process involved in oocyte maturation"/>
    <property type="evidence" value="ECO:0000266"/>
    <property type="project" value="RGD"/>
</dbReference>
<dbReference type="GO" id="GO:0090141">
    <property type="term" value="P:positive regulation of mitochondrial fission"/>
    <property type="evidence" value="ECO:0000266"/>
    <property type="project" value="RGD"/>
</dbReference>
<dbReference type="GO" id="GO:0045931">
    <property type="term" value="P:positive regulation of mitotic cell cycle"/>
    <property type="evidence" value="ECO:0000250"/>
    <property type="project" value="UniProtKB"/>
</dbReference>
<dbReference type="GO" id="GO:1900195">
    <property type="term" value="P:positive regulation of oocyte maturation"/>
    <property type="evidence" value="ECO:0000266"/>
    <property type="project" value="RGD"/>
</dbReference>
<dbReference type="GO" id="GO:0032436">
    <property type="term" value="P:positive regulation of proteasomal ubiquitin-dependent protein catabolic process"/>
    <property type="evidence" value="ECO:0000266"/>
    <property type="project" value="RGD"/>
</dbReference>
<dbReference type="GO" id="GO:0045727">
    <property type="term" value="P:positive regulation of translation"/>
    <property type="evidence" value="ECO:0000266"/>
    <property type="project" value="RGD"/>
</dbReference>
<dbReference type="GO" id="GO:0043161">
    <property type="term" value="P:proteasome-mediated ubiquitin-dependent protein catabolic process"/>
    <property type="evidence" value="ECO:0000266"/>
    <property type="project" value="RGD"/>
</dbReference>
<dbReference type="GO" id="GO:0071539">
    <property type="term" value="P:protein localization to centrosome"/>
    <property type="evidence" value="ECO:0000266"/>
    <property type="project" value="RGD"/>
</dbReference>
<dbReference type="GO" id="GO:0032465">
    <property type="term" value="P:regulation of cytokinesis"/>
    <property type="evidence" value="ECO:0000318"/>
    <property type="project" value="GO_Central"/>
</dbReference>
<dbReference type="GO" id="GO:0031647">
    <property type="term" value="P:regulation of protein stability"/>
    <property type="evidence" value="ECO:0000266"/>
    <property type="project" value="RGD"/>
</dbReference>
<dbReference type="GO" id="GO:0032355">
    <property type="term" value="P:response to estradiol"/>
    <property type="evidence" value="ECO:0000270"/>
    <property type="project" value="RGD"/>
</dbReference>
<dbReference type="GO" id="GO:0009611">
    <property type="term" value="P:response to wounding"/>
    <property type="evidence" value="ECO:0000266"/>
    <property type="project" value="RGD"/>
</dbReference>
<dbReference type="GO" id="GO:0007057">
    <property type="term" value="P:spindle assembly involved in female meiosis I"/>
    <property type="evidence" value="ECO:0000266"/>
    <property type="project" value="RGD"/>
</dbReference>
<dbReference type="GO" id="GO:0007051">
    <property type="term" value="P:spindle organization"/>
    <property type="evidence" value="ECO:0000266"/>
    <property type="project" value="RGD"/>
</dbReference>
<dbReference type="FunFam" id="3.30.200.20:FF:000042">
    <property type="entry name" value="Aurora kinase A"/>
    <property type="match status" value="1"/>
</dbReference>
<dbReference type="FunFam" id="1.10.510.10:FF:000235">
    <property type="entry name" value="Serine/threonine-protein kinase ark1"/>
    <property type="match status" value="1"/>
</dbReference>
<dbReference type="Gene3D" id="3.30.200.20">
    <property type="entry name" value="Phosphorylase Kinase, domain 1"/>
    <property type="match status" value="1"/>
</dbReference>
<dbReference type="Gene3D" id="1.10.510.10">
    <property type="entry name" value="Transferase(Phosphotransferase) domain 1"/>
    <property type="match status" value="1"/>
</dbReference>
<dbReference type="InterPro" id="IPR030616">
    <property type="entry name" value="Aur-like"/>
</dbReference>
<dbReference type="InterPro" id="IPR011009">
    <property type="entry name" value="Kinase-like_dom_sf"/>
</dbReference>
<dbReference type="InterPro" id="IPR000719">
    <property type="entry name" value="Prot_kinase_dom"/>
</dbReference>
<dbReference type="InterPro" id="IPR017441">
    <property type="entry name" value="Protein_kinase_ATP_BS"/>
</dbReference>
<dbReference type="InterPro" id="IPR008271">
    <property type="entry name" value="Ser/Thr_kinase_AS"/>
</dbReference>
<dbReference type="PANTHER" id="PTHR24350">
    <property type="entry name" value="SERINE/THREONINE-PROTEIN KINASE IAL-RELATED"/>
    <property type="match status" value="1"/>
</dbReference>
<dbReference type="Pfam" id="PF00069">
    <property type="entry name" value="Pkinase"/>
    <property type="match status" value="1"/>
</dbReference>
<dbReference type="SMART" id="SM00220">
    <property type="entry name" value="S_TKc"/>
    <property type="match status" value="1"/>
</dbReference>
<dbReference type="SUPFAM" id="SSF56112">
    <property type="entry name" value="Protein kinase-like (PK-like)"/>
    <property type="match status" value="1"/>
</dbReference>
<dbReference type="PROSITE" id="PS00107">
    <property type="entry name" value="PROTEIN_KINASE_ATP"/>
    <property type="match status" value="1"/>
</dbReference>
<dbReference type="PROSITE" id="PS50011">
    <property type="entry name" value="PROTEIN_KINASE_DOM"/>
    <property type="match status" value="1"/>
</dbReference>
<dbReference type="PROSITE" id="PS00108">
    <property type="entry name" value="PROTEIN_KINASE_ST"/>
    <property type="match status" value="1"/>
</dbReference>
<keyword id="KW-0067">ATP-binding</keyword>
<keyword id="KW-0131">Cell cycle</keyword>
<keyword id="KW-0132">Cell division</keyword>
<keyword id="KW-1003">Cell membrane</keyword>
<keyword id="KW-0966">Cell projection</keyword>
<keyword id="KW-0969">Cilium</keyword>
<keyword id="KW-0970">Cilium biogenesis/degradation</keyword>
<keyword id="KW-0963">Cytoplasm</keyword>
<keyword id="KW-0206">Cytoskeleton</keyword>
<keyword id="KW-1017">Isopeptide bond</keyword>
<keyword id="KW-0418">Kinase</keyword>
<keyword id="KW-0472">Membrane</keyword>
<keyword id="KW-0493">Microtubule</keyword>
<keyword id="KW-0498">Mitosis</keyword>
<keyword id="KW-0547">Nucleotide-binding</keyword>
<keyword id="KW-0597">Phosphoprotein</keyword>
<keyword id="KW-0656">Proto-oncogene</keyword>
<keyword id="KW-1185">Reference proteome</keyword>
<keyword id="KW-0723">Serine/threonine-protein kinase</keyword>
<keyword id="KW-0808">Transferase</keyword>
<keyword id="KW-0832">Ubl conjugation</keyword>
<reference key="1">
    <citation type="journal article" date="2002" name="Cancer Res.">
        <title>Centrosome amplification and overexpression of aurora A are early events in rat mammary carcinogenesis.</title>
        <authorList>
            <person name="Goepfert T.M."/>
            <person name="Adigun Y.E."/>
            <person name="Zhong L."/>
            <person name="Gay J."/>
            <person name="Medina D."/>
            <person name="Brinkley W.R."/>
        </authorList>
    </citation>
    <scope>NUCLEOTIDE SEQUENCE [MRNA]</scope>
    <source>
        <strain>Wistar Furth</strain>
        <tissue>Mammary gland</tissue>
    </source>
</reference>
<reference key="2">
    <citation type="journal article" date="2009" name="J. Biol. Chem.">
        <title>Phosphorylation of the par polarity complex protein Par3 at serine 962 is mediated by aurora A and regulates its function in neuronal polarity.</title>
        <authorList>
            <person name="Khazaei M.R."/>
            <person name="Puschel A.W."/>
        </authorList>
    </citation>
    <scope>FUNCTION</scope>
    <scope>PHOSPHORYLATION</scope>
    <scope>TISSUE SPECIFICITY</scope>
</reference>
<evidence type="ECO:0000250" key="1">
    <source>
        <dbReference type="UniProtKB" id="A0A8I3S724"/>
    </source>
</evidence>
<evidence type="ECO:0000250" key="2">
    <source>
        <dbReference type="UniProtKB" id="F1PNY0"/>
    </source>
</evidence>
<evidence type="ECO:0000250" key="3">
    <source>
        <dbReference type="UniProtKB" id="O14965"/>
    </source>
</evidence>
<evidence type="ECO:0000250" key="4">
    <source>
        <dbReference type="UniProtKB" id="P04198"/>
    </source>
</evidence>
<evidence type="ECO:0000250" key="5">
    <source>
        <dbReference type="UniProtKB" id="P97477"/>
    </source>
</evidence>
<evidence type="ECO:0000255" key="6">
    <source>
        <dbReference type="PROSITE-ProRule" id="PRU00159"/>
    </source>
</evidence>
<evidence type="ECO:0000255" key="7">
    <source>
        <dbReference type="PROSITE-ProRule" id="PRU10027"/>
    </source>
</evidence>
<evidence type="ECO:0000256" key="8">
    <source>
        <dbReference type="SAM" id="MobiDB-lite"/>
    </source>
</evidence>
<evidence type="ECO:0000269" key="9">
    <source>
    </source>
</evidence>
<evidence type="ECO:0000303" key="10">
    <source>
    </source>
</evidence>
<evidence type="ECO:0000312" key="11">
    <source>
        <dbReference type="RGD" id="628895"/>
    </source>
</evidence>
<comment type="function">
    <text evidence="1 3 9">Mitotic serine/threonine kinase that contributes to the regulation of cell cycle progression (By similarity). Associates with the centrosome and the spindle microtubules during mitosis and plays a critical role in various mitotic events including the establishment of mitotic spindle, centrosome duplication, centrosome separation as well as maturation, chromosomal alignment, spindle assembly checkpoint, and cytokinesis (By similarity). Required for normal spindle positioning during mitosis and for the localization of NUMA1 and DCTN1 to the cell cortex during metaphase (By similarity). Required for initial activation of CDK1 at centrosomes (By similarity). Phosphorylates numerous target proteins, including ARHGEF2, BORA, BRCA1, CDC25B, DLGP5, HDAC6, KIF2A, LATS2, NDEL1, PARD3, PPP1R2, PLK1, RASSF1, TACC3, p53/TP53 and TPX2. Phosphorylates MCRS1 which is required for MCRS1-mediated kinetochore fiber assembly and mitotic progression (By similarity). Regulates KIF2A tubulin depolymerase activity (By similarity). Required for normal axon formation (PubMed:19812038). Plays a role in microtubule remodeling during neurite extension. Important for microtubule formation and/or stabilization (By similarity). Also acts as a key regulatory component of the p53/TP53 pathway, and particularly the checkpoint-response pathways critical for oncogenic transformation of cells, by phosphorylating and stabilizating p53/TP53 (By similarity). Phosphorylates its own inhibitors, the protein phosphatase type 1 (PP1) isoforms, to inhibit their activity (By similarity). Inhibits cilia outgrowth (By similarity). Required for cilia disassembly via phosphorylation of HDAC6 and subsequent deacetylation of alpha-tubulin (By similarity). Regulates protein levels of the anti-apoptosis protein BIRC5 by suppressing the expression of the SCF(FBXL7) E3 ubiquitin-protein ligase substrate adapter FBXL7 through the phosphorylation of the transcription factor FOXP1 (By similarity).</text>
</comment>
<comment type="catalytic activity">
    <reaction evidence="3">
        <text>L-seryl-[protein] + ATP = O-phospho-L-seryl-[protein] + ADP + H(+)</text>
        <dbReference type="Rhea" id="RHEA:17989"/>
        <dbReference type="Rhea" id="RHEA-COMP:9863"/>
        <dbReference type="Rhea" id="RHEA-COMP:11604"/>
        <dbReference type="ChEBI" id="CHEBI:15378"/>
        <dbReference type="ChEBI" id="CHEBI:29999"/>
        <dbReference type="ChEBI" id="CHEBI:30616"/>
        <dbReference type="ChEBI" id="CHEBI:83421"/>
        <dbReference type="ChEBI" id="CHEBI:456216"/>
        <dbReference type="EC" id="2.7.11.1"/>
    </reaction>
</comment>
<comment type="catalytic activity">
    <reaction evidence="3">
        <text>L-threonyl-[protein] + ATP = O-phospho-L-threonyl-[protein] + ADP + H(+)</text>
        <dbReference type="Rhea" id="RHEA:46608"/>
        <dbReference type="Rhea" id="RHEA-COMP:11060"/>
        <dbReference type="Rhea" id="RHEA-COMP:11605"/>
        <dbReference type="ChEBI" id="CHEBI:15378"/>
        <dbReference type="ChEBI" id="CHEBI:30013"/>
        <dbReference type="ChEBI" id="CHEBI:30616"/>
        <dbReference type="ChEBI" id="CHEBI:61977"/>
        <dbReference type="ChEBI" id="CHEBI:456216"/>
        <dbReference type="EC" id="2.7.11.1"/>
    </reaction>
</comment>
<comment type="activity regulation">
    <text evidence="3">Activation of CDK1, appears to be an upstream event of AURKA activation (By similarity). Phosphatase inhibitor-2 (PPP1R2) and TPX2 act also as activators (By similarity). Inactivated by the G2 checkpoint (By similarity). Inhibited by GADD45A and p53/TP53, and through dephosphorylation by protein phosphatase type 1 (PP1) (By similarity). MLN8054 is also a potent and selective inhibitor (By similarity). Activated during the early phase of cilia disassembly in the presence of FBXL7 and CIMAP3 (By similarity). Inhibited by the small molecule inhibitor VX-680 (By similarity).</text>
</comment>
<comment type="subunit">
    <text evidence="3 5">Part of a complex composed of NEDD9, AURKA and CTTN; within the complex NEDD9 acts as a scaffold protein and is required for complex formation (By similarity). Identified in a complex with AUNIP and NIN (By similarity). Interacts with CPEB1, JTB, TACC1, TPX2, PPP2CA, as well as with the protein phosphatase type 1 (PP1) isoforms PPP1CA, PPP1CB and PPP1CC (By similarity). Also interacts with its substrates ARHGEF2, BORA, KIF2A, PARD3, and p53/TP53 (By similarity). Interaction with BORA promotes phosphorylation of PLK1 (By similarity). Interacts with FBXL7 and CIMAP3 (By similarity). Interacts with GADD45A, competing with its oligomerization (By similarity). Interacts (via C-terminus) with AUNIP (via C-terminus) (By similarity). Interacts with SIRT2 (By similarity). Interacts with FRY; this interaction facilitates AURKA-mediated PLK1 phosphorylation (By similarity). Interacts with MYCN; interaction is phospho-independent and triggers AURKA activation; AURKA competes with FBXW7 for binding to unphosphorylated MYCN but not for binding to phosphorylated MYCN (By similarity). Interacts with HNRNPU (By similarity). Interacts with AAAS (By similarity). Interacts with KLHL18 and CUL3 (By similarity). Interacts with FOXP1 (By similarity). Interacts with HDAC6; AURKA-mediated phosphorylation of HDAC6 promotes deacetylation of alpha-tubulin (By similarity).</text>
</comment>
<comment type="subcellular location">
    <subcellularLocation>
        <location evidence="3">Cytoplasm</location>
        <location evidence="3">Cytoskeleton</location>
        <location evidence="3">Microtubule organizing center</location>
        <location evidence="3">Centrosome</location>
    </subcellularLocation>
    <subcellularLocation>
        <location evidence="3">Cytoplasm</location>
        <location evidence="3">Cytoskeleton</location>
        <location evidence="3">Spindle pole</location>
    </subcellularLocation>
    <subcellularLocation>
        <location evidence="5">Cytoplasm</location>
        <location evidence="5">Cytoskeleton</location>
        <location evidence="5">Microtubule organizing center</location>
        <location evidence="5">Centrosome</location>
        <location evidence="5">Centriole</location>
    </subcellularLocation>
    <subcellularLocation>
        <location evidence="5">Cell projection</location>
        <location evidence="5">Neuron projection</location>
    </subcellularLocation>
    <subcellularLocation>
        <location evidence="3">Cell projection</location>
        <location evidence="3">Cilium</location>
    </subcellularLocation>
    <subcellularLocation>
        <location evidence="5">Cytoplasm</location>
        <location evidence="5">Cytoskeleton</location>
        <location evidence="5">Cilium basal body</location>
    </subcellularLocation>
    <subcellularLocation>
        <location evidence="2">Basolateral cell membrane</location>
    </subcellularLocation>
    <text evidence="3 5">Localizes on centrosomes in interphase cells and at each spindle pole in mitosis. Associates with both the pericentriolar material (PCM) and centrioles. Detected at the neurite hillock in developing neurons. Colocalized with SIRT2 at centrosome. The localization to the spindle poles is regulated by AAAS (By similarity).</text>
</comment>
<comment type="tissue specificity">
    <text evidence="9">Detected in neurons in brain cortex and hippocampus (at protein level). Expressed in mammary gland and tumor.</text>
</comment>
<comment type="induction">
    <text>Activated by progesterone.</text>
</comment>
<comment type="PTM">
    <text evidence="3 9">Activated by phosphorylation at Thr-281; this brings about a change in the conformation of the activation segment (By similarity). Phosphorylation at Thr-281 varies during the cell cycle and is highest during M phase (By similarity). Autophosphorylated at Thr-281 upon TPX2 binding (By similarity). Thr-281 can be phosphorylated by several kinases, including PAK and PKA (By similarity). Protein phosphatase type 1 (PP1) binds AURKA and inhibits its activity by dephosphorylating Thr-281 during mitosis (By similarity). Phosphorylation at Ser-335 decreases the kinase activity (By similarity). PPP2CA controls degradation by dephosphorylating Ser-52 at the end of mitosis (By similarity). Phosphorylated in embryonic brain neurons (PubMed:19812038).</text>
</comment>
<comment type="PTM">
    <text evidence="3 5">Ubiquitinated by CHFR, leading to its degradation by the proteasome (By similarity). Ubiquitinated by the anaphase-promoting complex (APC), leading to its degradation by the proteasome (By similarity). Ubiquitinated by the E3 ubiquitin-protein ligase complex SCF(FBXL7) during mitosis, leading to its degradation by the proteasome (By similarity). Ubiquitinated by the CUL3-KLHL18 ligase leading to its activation at the centrosome which is required for initiating mitotic entry (By similarity). Ubiquitination mediated by CUL3-KLHL18 ligase does not lead to its degradation by the proteasome (By similarity).</text>
</comment>
<comment type="similarity">
    <text evidence="6">Belongs to the protein kinase superfamily. Ser/Thr protein kinase family. Aurora subfamily.</text>
</comment>
<name>AURKA_RAT</name>